<sequence>MASSSNYDGILLGMGNPLLDISAVVDDEFLTKYDIKLNNAILAEDKHLPMYDEMSSKFNVEYIAGGATQNSIKVAQWMLQIPGATSYMGSIGKDKYGEAMKKDATAAGVNVHYYEDESAPTGTCGVCVVGGERSLIANLSAANCYKVDHLKKPENWALVEKAKFYYIAGFFLTVSPESIQLVSEHAAANNKVFTMNLSAPFICEFFKDVQEKFLPYMDFVFGNETEARTFSRVHGWETEDVEQIAIKISQLPKATGTYKRTTVITQGADPVVVAEDGKVKKYPVIPLPKEKLVDTNGAGDAFVGGFMSQLVKEKSIEECVKAGCYASNVVIQRSGCTYPEKPDFN</sequence>
<keyword id="KW-0067">ATP-binding</keyword>
<keyword id="KW-0963">Cytoplasm</keyword>
<keyword id="KW-0945">Host-virus interaction</keyword>
<keyword id="KW-0418">Kinase</keyword>
<keyword id="KW-0460">Magnesium</keyword>
<keyword id="KW-0547">Nucleotide-binding</keyword>
<keyword id="KW-0597">Phosphoprotein</keyword>
<keyword id="KW-0660">Purine salvage</keyword>
<keyword id="KW-1185">Reference proteome</keyword>
<keyword id="KW-0808">Transferase</keyword>
<protein>
    <recommendedName>
        <fullName evidence="6">Adenosine kinase 2</fullName>
        <shortName evidence="7">AK 2</shortName>
        <ecNumber evidence="2">2.7.1.20</ecNumber>
    </recommendedName>
    <alternativeName>
        <fullName evidence="6">Adenosine 5'-phosphotransferase 2</fullName>
    </alternativeName>
</protein>
<comment type="function">
    <text evidence="2 4">ATP dependent phosphorylation of adenosine and other related nucleoside analogs to monophosphate derivatives (PubMed:11115893). Essential to sustain methyl recycling (PubMed:17272833).</text>
</comment>
<comment type="catalytic activity">
    <reaction evidence="2">
        <text>adenosine + ATP = AMP + ADP + H(+)</text>
        <dbReference type="Rhea" id="RHEA:20824"/>
        <dbReference type="ChEBI" id="CHEBI:15378"/>
        <dbReference type="ChEBI" id="CHEBI:16335"/>
        <dbReference type="ChEBI" id="CHEBI:30616"/>
        <dbReference type="ChEBI" id="CHEBI:456215"/>
        <dbReference type="ChEBI" id="CHEBI:456216"/>
        <dbReference type="EC" id="2.7.1.20"/>
    </reaction>
    <physiologicalReaction direction="left-to-right" evidence="2">
        <dbReference type="Rhea" id="RHEA:20825"/>
    </physiologicalReaction>
</comment>
<comment type="cofactor">
    <cofactor evidence="1">
        <name>Mg(2+)</name>
        <dbReference type="ChEBI" id="CHEBI:18420"/>
    </cofactor>
</comment>
<comment type="activity regulation">
    <text evidence="3">Inactivated by the begomovirus AL2 protein or the curtovirus L2 protein.</text>
</comment>
<comment type="biophysicochemical properties">
    <kinetics>
        <KM evidence="2">0.3 uM for adenosine</KM>
        <KM evidence="2">370 uM for ATP</KM>
        <Vmax evidence="2">6.7 umol/min/mg enzyme with adenosine as substrate</Vmax>
        <Vmax evidence="2">7.8 umol/min/mg enzyme with ATP as substrate</Vmax>
    </kinetics>
</comment>
<comment type="pathway">
    <text evidence="7">Purine metabolism; AMP biosynthesis via salvage pathway; AMP from adenosine: step 1/1.</text>
</comment>
<comment type="subunit">
    <text evidence="3 5">Interacts with the begomovirus AL2 protein and the curtovirus L2 protein (PubMed:14615595). Interacts with KIN11 (PubMed:24498147).</text>
</comment>
<comment type="subcellular location">
    <subcellularLocation>
        <location evidence="5">Cytoplasm</location>
    </subcellularLocation>
</comment>
<comment type="tissue specificity">
    <text evidence="2 4">Widely expressed.</text>
</comment>
<comment type="developmental stage">
    <text evidence="4">Up-regulated during the lignification process in inflorescence stems.</text>
</comment>
<comment type="PTM">
    <text evidence="5">Phosphorylated by KIN11.</text>
</comment>
<comment type="similarity">
    <text evidence="7">Belongs to the carbohydrate kinase PfkB family.</text>
</comment>
<organism>
    <name type="scientific">Arabidopsis thaliana</name>
    <name type="common">Mouse-ear cress</name>
    <dbReference type="NCBI Taxonomy" id="3702"/>
    <lineage>
        <taxon>Eukaryota</taxon>
        <taxon>Viridiplantae</taxon>
        <taxon>Streptophyta</taxon>
        <taxon>Embryophyta</taxon>
        <taxon>Tracheophyta</taxon>
        <taxon>Spermatophyta</taxon>
        <taxon>Magnoliopsida</taxon>
        <taxon>eudicotyledons</taxon>
        <taxon>Gunneridae</taxon>
        <taxon>Pentapetalae</taxon>
        <taxon>rosids</taxon>
        <taxon>malvids</taxon>
        <taxon>Brassicales</taxon>
        <taxon>Brassicaceae</taxon>
        <taxon>Camelineae</taxon>
        <taxon>Arabidopsis</taxon>
    </lineage>
</organism>
<gene>
    <name evidence="6" type="primary">ADK2</name>
    <name evidence="8" type="ordered locus">At5g03300</name>
    <name evidence="10" type="ORF">F12E4.30</name>
    <name evidence="9" type="ORF">MOK16.21</name>
</gene>
<dbReference type="EC" id="2.7.1.20" evidence="2"/>
<dbReference type="EMBL" id="AF180895">
    <property type="protein sequence ID" value="AAG45247.1"/>
    <property type="molecule type" value="mRNA"/>
</dbReference>
<dbReference type="EMBL" id="AF180897">
    <property type="protein sequence ID" value="AAG45249.1"/>
    <property type="molecule type" value="Genomic_DNA"/>
</dbReference>
<dbReference type="EMBL" id="AB005240">
    <property type="protein sequence ID" value="BAB08390.1"/>
    <property type="molecule type" value="Genomic_DNA"/>
</dbReference>
<dbReference type="EMBL" id="AL162751">
    <property type="protein sequence ID" value="CAB83286.1"/>
    <property type="molecule type" value="Genomic_DNA"/>
</dbReference>
<dbReference type="EMBL" id="CP002688">
    <property type="protein sequence ID" value="AED90582.1"/>
    <property type="molecule type" value="Genomic_DNA"/>
</dbReference>
<dbReference type="EMBL" id="AY042855">
    <property type="protein sequence ID" value="AAK68795.1"/>
    <property type="molecule type" value="mRNA"/>
</dbReference>
<dbReference type="EMBL" id="AY072485">
    <property type="protein sequence ID" value="AAL66900.1"/>
    <property type="molecule type" value="mRNA"/>
</dbReference>
<dbReference type="PIR" id="T48351">
    <property type="entry name" value="T48351"/>
</dbReference>
<dbReference type="RefSeq" id="NP_195950.1">
    <property type="nucleotide sequence ID" value="NM_120408.4"/>
</dbReference>
<dbReference type="SMR" id="Q9LZG0"/>
<dbReference type="BioGRID" id="17158">
    <property type="interactions" value="1"/>
</dbReference>
<dbReference type="FunCoup" id="Q9LZG0">
    <property type="interactions" value="3629"/>
</dbReference>
<dbReference type="IntAct" id="Q9LZG0">
    <property type="interactions" value="1"/>
</dbReference>
<dbReference type="STRING" id="3702.Q9LZG0"/>
<dbReference type="iPTMnet" id="Q9LZG0"/>
<dbReference type="MetOSite" id="Q9LZG0"/>
<dbReference type="PaxDb" id="3702-AT5G03300.1"/>
<dbReference type="ProteomicsDB" id="244701"/>
<dbReference type="EnsemblPlants" id="AT5G03300.1">
    <property type="protein sequence ID" value="AT5G03300.1"/>
    <property type="gene ID" value="AT5G03300"/>
</dbReference>
<dbReference type="GeneID" id="831882"/>
<dbReference type="Gramene" id="AT5G03300.1">
    <property type="protein sequence ID" value="AT5G03300.1"/>
    <property type="gene ID" value="AT5G03300"/>
</dbReference>
<dbReference type="KEGG" id="ath:AT5G03300"/>
<dbReference type="Araport" id="AT5G03300"/>
<dbReference type="TAIR" id="AT5G03300">
    <property type="gene designation" value="ADK2"/>
</dbReference>
<dbReference type="eggNOG" id="KOG2854">
    <property type="taxonomic scope" value="Eukaryota"/>
</dbReference>
<dbReference type="HOGENOM" id="CLU_045832_0_0_1"/>
<dbReference type="InParanoid" id="Q9LZG0"/>
<dbReference type="OMA" id="HASAQNC"/>
<dbReference type="PhylomeDB" id="Q9LZG0"/>
<dbReference type="BioCyc" id="MetaCyc:AT5G03300-MONOMER"/>
<dbReference type="BRENDA" id="2.7.1.20">
    <property type="organism ID" value="399"/>
</dbReference>
<dbReference type="UniPathway" id="UPA00588">
    <property type="reaction ID" value="UER00659"/>
</dbReference>
<dbReference type="CD-CODE" id="4299E36E">
    <property type="entry name" value="Nucleolus"/>
</dbReference>
<dbReference type="PRO" id="PR:Q9LZG0"/>
<dbReference type="Proteomes" id="UP000006548">
    <property type="component" value="Chromosome 5"/>
</dbReference>
<dbReference type="ExpressionAtlas" id="Q9LZG0">
    <property type="expression patterns" value="baseline and differential"/>
</dbReference>
<dbReference type="GO" id="GO:0005737">
    <property type="term" value="C:cytoplasm"/>
    <property type="evidence" value="ECO:0000314"/>
    <property type="project" value="UniProtKB"/>
</dbReference>
<dbReference type="GO" id="GO:0005829">
    <property type="term" value="C:cytosol"/>
    <property type="evidence" value="ECO:0007005"/>
    <property type="project" value="TAIR"/>
</dbReference>
<dbReference type="GO" id="GO:0005886">
    <property type="term" value="C:plasma membrane"/>
    <property type="evidence" value="ECO:0007005"/>
    <property type="project" value="TAIR"/>
</dbReference>
<dbReference type="GO" id="GO:0004001">
    <property type="term" value="F:adenosine kinase activity"/>
    <property type="evidence" value="ECO:0000314"/>
    <property type="project" value="TAIR"/>
</dbReference>
<dbReference type="GO" id="GO:0005524">
    <property type="term" value="F:ATP binding"/>
    <property type="evidence" value="ECO:0007669"/>
    <property type="project" value="UniProtKB-KW"/>
</dbReference>
<dbReference type="GO" id="GO:0005507">
    <property type="term" value="F:copper ion binding"/>
    <property type="evidence" value="ECO:0007005"/>
    <property type="project" value="TAIR"/>
</dbReference>
<dbReference type="GO" id="GO:0019900">
    <property type="term" value="F:kinase binding"/>
    <property type="evidence" value="ECO:0000353"/>
    <property type="project" value="UniProtKB"/>
</dbReference>
<dbReference type="GO" id="GO:0006169">
    <property type="term" value="P:adenosine salvage"/>
    <property type="evidence" value="ECO:0000304"/>
    <property type="project" value="TAIR"/>
</dbReference>
<dbReference type="GO" id="GO:0044209">
    <property type="term" value="P:AMP salvage"/>
    <property type="evidence" value="ECO:0007669"/>
    <property type="project" value="UniProtKB-UniPathway"/>
</dbReference>
<dbReference type="CDD" id="cd01168">
    <property type="entry name" value="adenosine_kinase"/>
    <property type="match status" value="1"/>
</dbReference>
<dbReference type="FunFam" id="3.40.1190.20:FF:000006">
    <property type="entry name" value="Adenosine kinase 2"/>
    <property type="match status" value="1"/>
</dbReference>
<dbReference type="FunFam" id="3.30.1110.10:FF:000001">
    <property type="entry name" value="Adenosine kinase a"/>
    <property type="match status" value="1"/>
</dbReference>
<dbReference type="Gene3D" id="3.30.1110.10">
    <property type="match status" value="1"/>
</dbReference>
<dbReference type="Gene3D" id="3.40.1190.20">
    <property type="match status" value="1"/>
</dbReference>
<dbReference type="InterPro" id="IPR001805">
    <property type="entry name" value="Adenokinase"/>
</dbReference>
<dbReference type="InterPro" id="IPR002173">
    <property type="entry name" value="Carboh/pur_kinase_PfkB_CS"/>
</dbReference>
<dbReference type="InterPro" id="IPR011611">
    <property type="entry name" value="PfkB_dom"/>
</dbReference>
<dbReference type="InterPro" id="IPR029056">
    <property type="entry name" value="Ribokinase-like"/>
</dbReference>
<dbReference type="PANTHER" id="PTHR45769">
    <property type="entry name" value="ADENOSINE KINASE"/>
    <property type="match status" value="1"/>
</dbReference>
<dbReference type="PANTHER" id="PTHR45769:SF8">
    <property type="entry name" value="ADENOSINE KINASE 2"/>
    <property type="match status" value="1"/>
</dbReference>
<dbReference type="Pfam" id="PF00294">
    <property type="entry name" value="PfkB"/>
    <property type="match status" value="1"/>
</dbReference>
<dbReference type="PRINTS" id="PR00989">
    <property type="entry name" value="ADENOKINASE"/>
</dbReference>
<dbReference type="SUPFAM" id="SSF53613">
    <property type="entry name" value="Ribokinase-like"/>
    <property type="match status" value="1"/>
</dbReference>
<dbReference type="PROSITE" id="PS00584">
    <property type="entry name" value="PFKB_KINASES_2"/>
    <property type="match status" value="1"/>
</dbReference>
<proteinExistence type="evidence at protein level"/>
<evidence type="ECO:0000250" key="1">
    <source>
        <dbReference type="UniProtKB" id="P55263"/>
    </source>
</evidence>
<evidence type="ECO:0000269" key="2">
    <source>
    </source>
</evidence>
<evidence type="ECO:0000269" key="3">
    <source>
    </source>
</evidence>
<evidence type="ECO:0000269" key="4">
    <source>
    </source>
</evidence>
<evidence type="ECO:0000269" key="5">
    <source>
    </source>
</evidence>
<evidence type="ECO:0000303" key="6">
    <source>
    </source>
</evidence>
<evidence type="ECO:0000305" key="7"/>
<evidence type="ECO:0000312" key="8">
    <source>
        <dbReference type="Araport" id="AT5G03300"/>
    </source>
</evidence>
<evidence type="ECO:0000312" key="9">
    <source>
        <dbReference type="EMBL" id="BAB08390.1"/>
    </source>
</evidence>
<evidence type="ECO:0000312" key="10">
    <source>
        <dbReference type="EMBL" id="CAB83286.1"/>
    </source>
</evidence>
<name>ADK2_ARATH</name>
<feature type="chain" id="PRO_0000080058" description="Adenosine kinase 2">
    <location>
        <begin position="1"/>
        <end position="345"/>
    </location>
</feature>
<feature type="active site" evidence="1">
    <location>
        <position position="300"/>
    </location>
</feature>
<reference key="1">
    <citation type="journal article" date="2000" name="Plant Physiol.">
        <title>Adenosine kinase of Arabidopsis. Kinetic properties and gene expression.</title>
        <authorList>
            <person name="Moffatt B.A."/>
            <person name="Wang L."/>
            <person name="Allen M.S."/>
            <person name="Stevens Y.Y."/>
            <person name="Qin W."/>
            <person name="Snider J."/>
            <person name="von Schwartzenberg K."/>
        </authorList>
    </citation>
    <scope>NUCLEOTIDE SEQUENCE [GENOMIC DNA / MRNA]</scope>
    <scope>FUNCTION</scope>
    <scope>CATALYTIC ACTIVITY</scope>
    <scope>BIOPHYSICOCHEMICAL PROPERTIES</scope>
    <scope>TISSUE SPECIFICITY</scope>
    <source>
        <strain>cv. Columbia</strain>
    </source>
</reference>
<reference key="2">
    <citation type="journal article" date="1997" name="DNA Res.">
        <title>Structural analysis of Arabidopsis thaliana chromosome 5. I. Sequence features of the 1.6 Mb regions covered by twenty physically assigned P1 clones.</title>
        <authorList>
            <person name="Sato S."/>
            <person name="Kotani H."/>
            <person name="Nakamura Y."/>
            <person name="Kaneko T."/>
            <person name="Asamizu E."/>
            <person name="Fukami M."/>
            <person name="Miyajima N."/>
            <person name="Tabata S."/>
        </authorList>
    </citation>
    <scope>NUCLEOTIDE SEQUENCE [LARGE SCALE GENOMIC DNA]</scope>
    <source>
        <strain>cv. Columbia</strain>
    </source>
</reference>
<reference key="3">
    <citation type="journal article" date="2000" name="Nature">
        <title>Sequence and analysis of chromosome 5 of the plant Arabidopsis thaliana.</title>
        <authorList>
            <person name="Tabata S."/>
            <person name="Kaneko T."/>
            <person name="Nakamura Y."/>
            <person name="Kotani H."/>
            <person name="Kato T."/>
            <person name="Asamizu E."/>
            <person name="Miyajima N."/>
            <person name="Sasamoto S."/>
            <person name="Kimura T."/>
            <person name="Hosouchi T."/>
            <person name="Kawashima K."/>
            <person name="Kohara M."/>
            <person name="Matsumoto M."/>
            <person name="Matsuno A."/>
            <person name="Muraki A."/>
            <person name="Nakayama S."/>
            <person name="Nakazaki N."/>
            <person name="Naruo K."/>
            <person name="Okumura S."/>
            <person name="Shinpo S."/>
            <person name="Takeuchi C."/>
            <person name="Wada T."/>
            <person name="Watanabe A."/>
            <person name="Yamada M."/>
            <person name="Yasuda M."/>
            <person name="Sato S."/>
            <person name="de la Bastide M."/>
            <person name="Huang E."/>
            <person name="Spiegel L."/>
            <person name="Gnoj L."/>
            <person name="O'Shaughnessy A."/>
            <person name="Preston R."/>
            <person name="Habermann K."/>
            <person name="Murray J."/>
            <person name="Johnson D."/>
            <person name="Rohlfing T."/>
            <person name="Nelson J."/>
            <person name="Stoneking T."/>
            <person name="Pepin K."/>
            <person name="Spieth J."/>
            <person name="Sekhon M."/>
            <person name="Armstrong J."/>
            <person name="Becker M."/>
            <person name="Belter E."/>
            <person name="Cordum H."/>
            <person name="Cordes M."/>
            <person name="Courtney L."/>
            <person name="Courtney W."/>
            <person name="Dante M."/>
            <person name="Du H."/>
            <person name="Edwards J."/>
            <person name="Fryman J."/>
            <person name="Haakensen B."/>
            <person name="Lamar E."/>
            <person name="Latreille P."/>
            <person name="Leonard S."/>
            <person name="Meyer R."/>
            <person name="Mulvaney E."/>
            <person name="Ozersky P."/>
            <person name="Riley A."/>
            <person name="Strowmatt C."/>
            <person name="Wagner-McPherson C."/>
            <person name="Wollam A."/>
            <person name="Yoakum M."/>
            <person name="Bell M."/>
            <person name="Dedhia N."/>
            <person name="Parnell L."/>
            <person name="Shah R."/>
            <person name="Rodriguez M."/>
            <person name="Hoon See L."/>
            <person name="Vil D."/>
            <person name="Baker J."/>
            <person name="Kirchoff K."/>
            <person name="Toth K."/>
            <person name="King L."/>
            <person name="Bahret A."/>
            <person name="Miller B."/>
            <person name="Marra M.A."/>
            <person name="Martienssen R."/>
            <person name="McCombie W.R."/>
            <person name="Wilson R.K."/>
            <person name="Murphy G."/>
            <person name="Bancroft I."/>
            <person name="Volckaert G."/>
            <person name="Wambutt R."/>
            <person name="Duesterhoeft A."/>
            <person name="Stiekema W."/>
            <person name="Pohl T."/>
            <person name="Entian K.-D."/>
            <person name="Terryn N."/>
            <person name="Hartley N."/>
            <person name="Bent E."/>
            <person name="Johnson S."/>
            <person name="Langham S.-A."/>
            <person name="McCullagh B."/>
            <person name="Robben J."/>
            <person name="Grymonprez B."/>
            <person name="Zimmermann W."/>
            <person name="Ramsperger U."/>
            <person name="Wedler H."/>
            <person name="Balke K."/>
            <person name="Wedler E."/>
            <person name="Peters S."/>
            <person name="van Staveren M."/>
            <person name="Dirkse W."/>
            <person name="Mooijman P."/>
            <person name="Klein Lankhorst R."/>
            <person name="Weitzenegger T."/>
            <person name="Bothe G."/>
            <person name="Rose M."/>
            <person name="Hauf J."/>
            <person name="Berneiser S."/>
            <person name="Hempel S."/>
            <person name="Feldpausch M."/>
            <person name="Lamberth S."/>
            <person name="Villarroel R."/>
            <person name="Gielen J."/>
            <person name="Ardiles W."/>
            <person name="Bents O."/>
            <person name="Lemcke K."/>
            <person name="Kolesov G."/>
            <person name="Mayer K.F.X."/>
            <person name="Rudd S."/>
            <person name="Schoof H."/>
            <person name="Schueller C."/>
            <person name="Zaccaria P."/>
            <person name="Mewes H.-W."/>
            <person name="Bevan M."/>
            <person name="Fransz P.F."/>
        </authorList>
    </citation>
    <scope>NUCLEOTIDE SEQUENCE [LARGE SCALE GENOMIC DNA]</scope>
    <source>
        <strain>cv. Columbia</strain>
    </source>
</reference>
<reference key="4">
    <citation type="journal article" date="2017" name="Plant J.">
        <title>Araport11: a complete reannotation of the Arabidopsis thaliana reference genome.</title>
        <authorList>
            <person name="Cheng C.Y."/>
            <person name="Krishnakumar V."/>
            <person name="Chan A.P."/>
            <person name="Thibaud-Nissen F."/>
            <person name="Schobel S."/>
            <person name="Town C.D."/>
        </authorList>
    </citation>
    <scope>GENOME REANNOTATION</scope>
    <source>
        <strain>cv. Columbia</strain>
    </source>
</reference>
<reference key="5">
    <citation type="journal article" date="2003" name="Science">
        <title>Empirical analysis of transcriptional activity in the Arabidopsis genome.</title>
        <authorList>
            <person name="Yamada K."/>
            <person name="Lim J."/>
            <person name="Dale J.M."/>
            <person name="Chen H."/>
            <person name="Shinn P."/>
            <person name="Palm C.J."/>
            <person name="Southwick A.M."/>
            <person name="Wu H.C."/>
            <person name="Kim C.J."/>
            <person name="Nguyen M."/>
            <person name="Pham P.K."/>
            <person name="Cheuk R.F."/>
            <person name="Karlin-Newmann G."/>
            <person name="Liu S.X."/>
            <person name="Lam B."/>
            <person name="Sakano H."/>
            <person name="Wu T."/>
            <person name="Yu G."/>
            <person name="Miranda M."/>
            <person name="Quach H.L."/>
            <person name="Tripp M."/>
            <person name="Chang C.H."/>
            <person name="Lee J.M."/>
            <person name="Toriumi M.J."/>
            <person name="Chan M.M."/>
            <person name="Tang C.C."/>
            <person name="Onodera C.S."/>
            <person name="Deng J.M."/>
            <person name="Akiyama K."/>
            <person name="Ansari Y."/>
            <person name="Arakawa T."/>
            <person name="Banh J."/>
            <person name="Banno F."/>
            <person name="Bowser L."/>
            <person name="Brooks S.Y."/>
            <person name="Carninci P."/>
            <person name="Chao Q."/>
            <person name="Choy N."/>
            <person name="Enju A."/>
            <person name="Goldsmith A.D."/>
            <person name="Gurjal M."/>
            <person name="Hansen N.F."/>
            <person name="Hayashizaki Y."/>
            <person name="Johnson-Hopson C."/>
            <person name="Hsuan V.W."/>
            <person name="Iida K."/>
            <person name="Karnes M."/>
            <person name="Khan S."/>
            <person name="Koesema E."/>
            <person name="Ishida J."/>
            <person name="Jiang P.X."/>
            <person name="Jones T."/>
            <person name="Kawai J."/>
            <person name="Kamiya A."/>
            <person name="Meyers C."/>
            <person name="Nakajima M."/>
            <person name="Narusaka M."/>
            <person name="Seki M."/>
            <person name="Sakurai T."/>
            <person name="Satou M."/>
            <person name="Tamse R."/>
            <person name="Vaysberg M."/>
            <person name="Wallender E.K."/>
            <person name="Wong C."/>
            <person name="Yamamura Y."/>
            <person name="Yuan S."/>
            <person name="Shinozaki K."/>
            <person name="Davis R.W."/>
            <person name="Theologis A."/>
            <person name="Ecker J.R."/>
        </authorList>
    </citation>
    <scope>NUCLEOTIDE SEQUENCE [LARGE SCALE MRNA]</scope>
    <source>
        <strain>cv. Columbia</strain>
    </source>
</reference>
<reference key="6">
    <citation type="journal article" date="2003" name="Plant Cell">
        <title>Adenosine kinase is inactivated by geminivirus AL2 and L2 proteins.</title>
        <authorList>
            <person name="Wang H."/>
            <person name="Hao L."/>
            <person name="Shung C.-Y."/>
            <person name="Sunter G."/>
            <person name="Bisaro D.M."/>
        </authorList>
    </citation>
    <scope>INTERACTION WITH TOMATO GOLDEN MOSAIC VIRUS AL2 AND BEET CURLY TOP VIRUS L2</scope>
    <scope>ACTIVITY REGULATION</scope>
</reference>
<reference key="7">
    <citation type="journal article" date="2007" name="J. Exp. Bot.">
        <title>Methyl recycling activities are co-ordinately regulated during plant development.</title>
        <authorList>
            <person name="Pereira L.A.R."/>
            <person name="Todorova M."/>
            <person name="Cai X."/>
            <person name="Makaroff C.A."/>
            <person name="Emery R.J.N."/>
            <person name="Moffatt B.A."/>
        </authorList>
    </citation>
    <scope>FUNCTION</scope>
    <scope>TISSUE SPECIFICITY</scope>
    <scope>DEVELOPMENTAL STAGE</scope>
</reference>
<reference key="8">
    <citation type="journal article" date="2014" name="PLoS ONE">
        <title>A complex containing SNF1-related kinase (SnRK1) and adenosine kinase in Arabidopsis.</title>
        <authorList>
            <person name="Mohannath G."/>
            <person name="Jackel J.N."/>
            <person name="Lee Y.H."/>
            <person name="Buchmann R.C."/>
            <person name="Wang H."/>
            <person name="Patil V."/>
            <person name="Adams A.K."/>
            <person name="Bisaro D.M."/>
        </authorList>
    </citation>
    <scope>INTERACTION WITH KIN11</scope>
    <scope>PHOSPHORYLATION</scope>
    <scope>SUBCELLULAR LOCATION</scope>
</reference>
<accession>Q9LZG0</accession>